<proteinExistence type="predicted"/>
<accession>O15925</accession>
<name>RDRP_CPVKS</name>
<organismHost>
    <name type="scientific">Cryptosporidium parvum</name>
    <dbReference type="NCBI Taxonomy" id="5807"/>
</organismHost>
<comment type="function">
    <text evidence="2">RNA-dependent RNA polymerase which replicates the viral genome.</text>
</comment>
<comment type="catalytic activity">
    <reaction evidence="1">
        <text>RNA(n) + a ribonucleoside 5'-triphosphate = RNA(n+1) + diphosphate</text>
        <dbReference type="Rhea" id="RHEA:21248"/>
        <dbReference type="Rhea" id="RHEA-COMP:14527"/>
        <dbReference type="Rhea" id="RHEA-COMP:17342"/>
        <dbReference type="ChEBI" id="CHEBI:33019"/>
        <dbReference type="ChEBI" id="CHEBI:61557"/>
        <dbReference type="ChEBI" id="CHEBI:140395"/>
        <dbReference type="EC" id="2.7.7.48"/>
    </reaction>
</comment>
<feature type="chain" id="PRO_0000402796" description="RNA-directed RNA polymerase">
    <location>
        <begin position="1"/>
        <end position="524"/>
    </location>
</feature>
<feature type="domain" description="RdRp catalytic" evidence="1">
    <location>
        <begin position="220"/>
        <end position="340"/>
    </location>
</feature>
<organism>
    <name type="scientific">Cryptosporidium parvum virus 1 (strain KSU-1)</name>
    <dbReference type="NCBI Taxonomy" id="766191"/>
    <lineage>
        <taxon>Viruses</taxon>
        <taxon>Riboviria</taxon>
        <taxon>Orthornavirae</taxon>
        <taxon>Pisuviricota</taxon>
        <taxon>Duplopiviricetes</taxon>
        <taxon>Durnavirales</taxon>
        <taxon>Partitiviridae</taxon>
        <taxon>Cryspovirus</taxon>
        <taxon>Cryptosporidium parvum virus 1</taxon>
    </lineage>
</organism>
<reference key="1">
    <citation type="journal article" date="1997" name="Mol. Microbiol.">
        <title>Virus-like, double-stranded RNAs in the parasitic protozoan Cryptosporidium parvum.</title>
        <authorList>
            <person name="Khramtsov N.V."/>
            <person name="Woods K.M."/>
            <person name="Nesterenko M.V."/>
            <person name="Dykstra C.C."/>
            <person name="Upton S.J."/>
        </authorList>
    </citation>
    <scope>NUCLEOTIDE SEQUENCE [GENOMIC RNA]</scope>
</reference>
<dbReference type="EC" id="2.7.7.48"/>
<dbReference type="EMBL" id="U95995">
    <property type="protein sequence ID" value="AAC47805.1"/>
    <property type="molecule type" value="Genomic_RNA"/>
</dbReference>
<dbReference type="SMR" id="O15925"/>
<dbReference type="Proteomes" id="UP000006921">
    <property type="component" value="Genome"/>
</dbReference>
<dbReference type="GO" id="GO:0000166">
    <property type="term" value="F:nucleotide binding"/>
    <property type="evidence" value="ECO:0007669"/>
    <property type="project" value="UniProtKB-KW"/>
</dbReference>
<dbReference type="GO" id="GO:0003723">
    <property type="term" value="F:RNA binding"/>
    <property type="evidence" value="ECO:0007669"/>
    <property type="project" value="InterPro"/>
</dbReference>
<dbReference type="GO" id="GO:0003968">
    <property type="term" value="F:RNA-directed RNA polymerase activity"/>
    <property type="evidence" value="ECO:0007669"/>
    <property type="project" value="UniProtKB-KW"/>
</dbReference>
<dbReference type="GO" id="GO:0006351">
    <property type="term" value="P:DNA-templated transcription"/>
    <property type="evidence" value="ECO:0007669"/>
    <property type="project" value="InterPro"/>
</dbReference>
<dbReference type="GO" id="GO:0039694">
    <property type="term" value="P:viral RNA genome replication"/>
    <property type="evidence" value="ECO:0007669"/>
    <property type="project" value="InterPro"/>
</dbReference>
<dbReference type="CDD" id="cd01699">
    <property type="entry name" value="RNA_dep_RNAP"/>
    <property type="match status" value="1"/>
</dbReference>
<dbReference type="Gene3D" id="3.30.70.270">
    <property type="match status" value="1"/>
</dbReference>
<dbReference type="InterPro" id="IPR043502">
    <property type="entry name" value="DNA/RNA_pol_sf"/>
</dbReference>
<dbReference type="InterPro" id="IPR043128">
    <property type="entry name" value="Rev_trsase/Diguanyl_cyclase"/>
</dbReference>
<dbReference type="InterPro" id="IPR001205">
    <property type="entry name" value="RNA-dir_pol_C"/>
</dbReference>
<dbReference type="InterPro" id="IPR007094">
    <property type="entry name" value="RNA-dir_pol_PSvirus"/>
</dbReference>
<dbReference type="Pfam" id="PF00680">
    <property type="entry name" value="RdRP_1"/>
    <property type="match status" value="1"/>
</dbReference>
<dbReference type="SUPFAM" id="SSF56672">
    <property type="entry name" value="DNA/RNA polymerases"/>
    <property type="match status" value="1"/>
</dbReference>
<dbReference type="PROSITE" id="PS50507">
    <property type="entry name" value="RDRP_SSRNA_POS"/>
    <property type="match status" value="1"/>
</dbReference>
<protein>
    <recommendedName>
        <fullName>RNA-directed RNA polymerase</fullName>
        <ecNumber>2.7.7.48</ecNumber>
    </recommendedName>
</protein>
<keyword id="KW-0547">Nucleotide-binding</keyword>
<keyword id="KW-0548">Nucleotidyltransferase</keyword>
<keyword id="KW-1185">Reference proteome</keyword>
<keyword id="KW-0696">RNA-directed RNA polymerase</keyword>
<keyword id="KW-0808">Transferase</keyword>
<keyword id="KW-0693">Viral RNA replication</keyword>
<evidence type="ECO:0000255" key="1">
    <source>
        <dbReference type="PROSITE-ProRule" id="PRU00539"/>
    </source>
</evidence>
<evidence type="ECO:0000305" key="2"/>
<sequence>MKFVNIYEIQRFDGQPTRHGIAPKKIFRSKYIPTGLVPRLKYWRDVPSRAEMSKRIGKYFEDEFKFYPNEEKLNEAVNIVQEKWISHYGTSLNVTSVSESFRTLPKSTSAGLPFKSGCTKYEARNKMMRFARSQWDRVSKELQLQVLPCRLGARCQLRKRGENKPRLIWAYPGYLSIIENQYLTAIKKVPPPNFIGWSTNWLDGGKSLNRLLFGDKWTWQSIAQIDFSSFDATVRTELIFHAFKILRSLFDLTRTENIMLDQLRHYFINTPILFYDKIIVKNRGIPSGSAFTQIIGTIVNMIACQYASLRSRDYNLRIPFSCWLGDDSFLNFETALCRQEFEYDYLEKFKELGLNVSIDKTHYTTRFIDDFEVRFKGVRPYVKFLGKQIDILLDLTFHNDLDKLDAQMALPEKEDLSAYETGVRLIGLVWAYGAHYDIYLRILKVYLSLKLKPEFHVQQLLSYSEKPERTKRYQENFFSSMKYQLNLDLDIYDLLAFPKFWDVSNRYFGSKYERLDFRSHKIYG</sequence>